<sequence length="28" mass="2914">EASGETFVAENDACKCGSDCKCNPCTCK</sequence>
<gene>
    <name type="primary">LSC210</name>
</gene>
<proteinExistence type="evidence at transcript level"/>
<organism>
    <name type="scientific">Brassica napus</name>
    <name type="common">Rape</name>
    <dbReference type="NCBI Taxonomy" id="3708"/>
    <lineage>
        <taxon>Eukaryota</taxon>
        <taxon>Viridiplantae</taxon>
        <taxon>Streptophyta</taxon>
        <taxon>Embryophyta</taxon>
        <taxon>Tracheophyta</taxon>
        <taxon>Spermatophyta</taxon>
        <taxon>Magnoliopsida</taxon>
        <taxon>eudicotyledons</taxon>
        <taxon>Gunneridae</taxon>
        <taxon>Pentapetalae</taxon>
        <taxon>rosids</taxon>
        <taxon>malvids</taxon>
        <taxon>Brassicales</taxon>
        <taxon>Brassicaceae</taxon>
        <taxon>Brassiceae</taxon>
        <taxon>Brassica</taxon>
    </lineage>
</organism>
<evidence type="ECO:0000305" key="1"/>
<dbReference type="EMBL" id="U68222">
    <property type="protein sequence ID" value="AAB53104.1"/>
    <property type="molecule type" value="mRNA"/>
</dbReference>
<dbReference type="GO" id="GO:0046872">
    <property type="term" value="F:metal ion binding"/>
    <property type="evidence" value="ECO:0007669"/>
    <property type="project" value="UniProtKB-KW"/>
</dbReference>
<dbReference type="InterPro" id="IPR000347">
    <property type="entry name" value="Metalthion_15p"/>
</dbReference>
<dbReference type="Pfam" id="PF01439">
    <property type="entry name" value="Metallothio_2"/>
    <property type="match status" value="1"/>
</dbReference>
<feature type="chain" id="PRO_0000197392" description="Metallothionein-like protein type 2 LSC210">
    <location>
        <begin position="1" status="less than"/>
        <end position="28"/>
    </location>
</feature>
<feature type="non-terminal residue">
    <location>
        <position position="1"/>
    </location>
</feature>
<reference key="1">
    <citation type="submission" date="1996-09" db="EMBL/GenBank/DDBJ databases">
        <authorList>
            <person name="Buchanan-Wollaston V."/>
            <person name="Ainsworth C."/>
        </authorList>
    </citation>
    <scope>NUCLEOTIDE SEQUENCE [MRNA]</scope>
    <source>
        <strain>cv. Falcon</strain>
        <tissue>Leaf</tissue>
    </source>
</reference>
<comment type="function">
    <text>Metallothioneins have a high content of cysteine residues that bind various heavy metals.</text>
</comment>
<comment type="similarity">
    <text evidence="1">Belongs to the metallothionein superfamily. Type 15 family.</text>
</comment>
<accession>Q96353</accession>
<protein>
    <recommendedName>
        <fullName>Metallothionein-like protein type 2 LSC210</fullName>
    </recommendedName>
</protein>
<keyword id="KW-0479">Metal-binding</keyword>
<keyword id="KW-0480">Metal-thiolate cluster</keyword>
<name>MT2_BRANA</name>